<proteinExistence type="inferred from homology"/>
<dbReference type="EC" id="2.7.2.3" evidence="1"/>
<dbReference type="EMBL" id="CP001029">
    <property type="protein sequence ID" value="ACB80486.1"/>
    <property type="molecule type" value="Genomic_DNA"/>
</dbReference>
<dbReference type="RefSeq" id="WP_012454219.1">
    <property type="nucleotide sequence ID" value="NC_010725.1"/>
</dbReference>
<dbReference type="SMR" id="B1Z980"/>
<dbReference type="STRING" id="441620.Mpop_2324"/>
<dbReference type="KEGG" id="mpo:Mpop_2324"/>
<dbReference type="eggNOG" id="COG0126">
    <property type="taxonomic scope" value="Bacteria"/>
</dbReference>
<dbReference type="HOGENOM" id="CLU_025427_0_2_5"/>
<dbReference type="OrthoDB" id="9808460at2"/>
<dbReference type="UniPathway" id="UPA00109">
    <property type="reaction ID" value="UER00185"/>
</dbReference>
<dbReference type="Proteomes" id="UP000007136">
    <property type="component" value="Chromosome"/>
</dbReference>
<dbReference type="GO" id="GO:0005829">
    <property type="term" value="C:cytosol"/>
    <property type="evidence" value="ECO:0007669"/>
    <property type="project" value="TreeGrafter"/>
</dbReference>
<dbReference type="GO" id="GO:0043531">
    <property type="term" value="F:ADP binding"/>
    <property type="evidence" value="ECO:0007669"/>
    <property type="project" value="TreeGrafter"/>
</dbReference>
<dbReference type="GO" id="GO:0005524">
    <property type="term" value="F:ATP binding"/>
    <property type="evidence" value="ECO:0007669"/>
    <property type="project" value="UniProtKB-KW"/>
</dbReference>
<dbReference type="GO" id="GO:0004618">
    <property type="term" value="F:phosphoglycerate kinase activity"/>
    <property type="evidence" value="ECO:0007669"/>
    <property type="project" value="UniProtKB-UniRule"/>
</dbReference>
<dbReference type="GO" id="GO:0006094">
    <property type="term" value="P:gluconeogenesis"/>
    <property type="evidence" value="ECO:0007669"/>
    <property type="project" value="TreeGrafter"/>
</dbReference>
<dbReference type="GO" id="GO:0006096">
    <property type="term" value="P:glycolytic process"/>
    <property type="evidence" value="ECO:0007669"/>
    <property type="project" value="UniProtKB-UniRule"/>
</dbReference>
<dbReference type="CDD" id="cd00318">
    <property type="entry name" value="Phosphoglycerate_kinase"/>
    <property type="match status" value="1"/>
</dbReference>
<dbReference type="FunFam" id="3.40.50.1260:FF:000006">
    <property type="entry name" value="Phosphoglycerate kinase"/>
    <property type="match status" value="1"/>
</dbReference>
<dbReference type="FunFam" id="3.40.50.1260:FF:000031">
    <property type="entry name" value="Phosphoglycerate kinase 1"/>
    <property type="match status" value="1"/>
</dbReference>
<dbReference type="Gene3D" id="3.40.50.1260">
    <property type="entry name" value="Phosphoglycerate kinase, N-terminal domain"/>
    <property type="match status" value="2"/>
</dbReference>
<dbReference type="HAMAP" id="MF_00145">
    <property type="entry name" value="Phosphoglyc_kinase"/>
    <property type="match status" value="1"/>
</dbReference>
<dbReference type="InterPro" id="IPR001576">
    <property type="entry name" value="Phosphoglycerate_kinase"/>
</dbReference>
<dbReference type="InterPro" id="IPR015911">
    <property type="entry name" value="Phosphoglycerate_kinase_CS"/>
</dbReference>
<dbReference type="InterPro" id="IPR015824">
    <property type="entry name" value="Phosphoglycerate_kinase_N"/>
</dbReference>
<dbReference type="InterPro" id="IPR036043">
    <property type="entry name" value="Phosphoglycerate_kinase_sf"/>
</dbReference>
<dbReference type="PANTHER" id="PTHR11406">
    <property type="entry name" value="PHOSPHOGLYCERATE KINASE"/>
    <property type="match status" value="1"/>
</dbReference>
<dbReference type="PANTHER" id="PTHR11406:SF23">
    <property type="entry name" value="PHOSPHOGLYCERATE KINASE 1, CHLOROPLASTIC-RELATED"/>
    <property type="match status" value="1"/>
</dbReference>
<dbReference type="Pfam" id="PF00162">
    <property type="entry name" value="PGK"/>
    <property type="match status" value="1"/>
</dbReference>
<dbReference type="PIRSF" id="PIRSF000724">
    <property type="entry name" value="Pgk"/>
    <property type="match status" value="1"/>
</dbReference>
<dbReference type="PRINTS" id="PR00477">
    <property type="entry name" value="PHGLYCKINASE"/>
</dbReference>
<dbReference type="SUPFAM" id="SSF53748">
    <property type="entry name" value="Phosphoglycerate kinase"/>
    <property type="match status" value="1"/>
</dbReference>
<dbReference type="PROSITE" id="PS00111">
    <property type="entry name" value="PGLYCERATE_KINASE"/>
    <property type="match status" value="1"/>
</dbReference>
<name>PGK_METPB</name>
<comment type="catalytic activity">
    <reaction evidence="1">
        <text>(2R)-3-phosphoglycerate + ATP = (2R)-3-phospho-glyceroyl phosphate + ADP</text>
        <dbReference type="Rhea" id="RHEA:14801"/>
        <dbReference type="ChEBI" id="CHEBI:30616"/>
        <dbReference type="ChEBI" id="CHEBI:57604"/>
        <dbReference type="ChEBI" id="CHEBI:58272"/>
        <dbReference type="ChEBI" id="CHEBI:456216"/>
        <dbReference type="EC" id="2.7.2.3"/>
    </reaction>
</comment>
<comment type="pathway">
    <text evidence="1">Carbohydrate degradation; glycolysis; pyruvate from D-glyceraldehyde 3-phosphate: step 2/5.</text>
</comment>
<comment type="subunit">
    <text evidence="1">Monomer.</text>
</comment>
<comment type="subcellular location">
    <subcellularLocation>
        <location evidence="1">Cytoplasm</location>
    </subcellularLocation>
</comment>
<comment type="similarity">
    <text evidence="1">Belongs to the phosphoglycerate kinase family.</text>
</comment>
<gene>
    <name evidence="1" type="primary">pgk</name>
    <name type="ordered locus">Mpop_2324</name>
</gene>
<sequence>MTDFRTLDDAGPLQGKRVLLRVDLNVPMEGGRVTDATRIERVVPTIREIAEAGGRVILLAHFGRPKGKPEPKDSLKPILPTLSEKLGRPVAFGEDCVGEAAAKAVAALKDGDVLLLENTRYHAGEEKNAPEFAQALAANGDLYVNEAFSAAHRAHASTEGLARLLPAYAGRLMQAELDALTKGLEAPARPVIAIVGGAKVSTKIDLLENLVAKVDMLVIGGGMANTFLHAQGKDVGKSLCEKDLAETAQRILAAAKEKNCTIILPADALVAREFKANAENETVTVDAVPSDAMILDVGASSIATIDGAIDEARTLVWNGPLGAFELTPFDTGTVAVAQHAARRTRAGQLVSVAGGGDTVAALNHAGVGEDFSYVSTAGGAFLEWLEGKELPGVEALRAKA</sequence>
<reference key="1">
    <citation type="submission" date="2008-04" db="EMBL/GenBank/DDBJ databases">
        <title>Complete sequence of chromosome of Methylobacterium populi BJ001.</title>
        <authorList>
            <consortium name="US DOE Joint Genome Institute"/>
            <person name="Copeland A."/>
            <person name="Lucas S."/>
            <person name="Lapidus A."/>
            <person name="Glavina del Rio T."/>
            <person name="Dalin E."/>
            <person name="Tice H."/>
            <person name="Bruce D."/>
            <person name="Goodwin L."/>
            <person name="Pitluck S."/>
            <person name="Chertkov O."/>
            <person name="Brettin T."/>
            <person name="Detter J.C."/>
            <person name="Han C."/>
            <person name="Kuske C.R."/>
            <person name="Schmutz J."/>
            <person name="Larimer F."/>
            <person name="Land M."/>
            <person name="Hauser L."/>
            <person name="Kyrpides N."/>
            <person name="Mikhailova N."/>
            <person name="Marx C."/>
            <person name="Richardson P."/>
        </authorList>
    </citation>
    <scope>NUCLEOTIDE SEQUENCE [LARGE SCALE GENOMIC DNA]</scope>
    <source>
        <strain>ATCC BAA-705 / NCIMB 13946 / BJ001</strain>
    </source>
</reference>
<accession>B1Z980</accession>
<keyword id="KW-0067">ATP-binding</keyword>
<keyword id="KW-0963">Cytoplasm</keyword>
<keyword id="KW-0324">Glycolysis</keyword>
<keyword id="KW-0418">Kinase</keyword>
<keyword id="KW-0547">Nucleotide-binding</keyword>
<keyword id="KW-0808">Transferase</keyword>
<organism>
    <name type="scientific">Methylorubrum populi (strain ATCC BAA-705 / NCIMB 13946 / BJ001)</name>
    <name type="common">Methylobacterium populi</name>
    <dbReference type="NCBI Taxonomy" id="441620"/>
    <lineage>
        <taxon>Bacteria</taxon>
        <taxon>Pseudomonadati</taxon>
        <taxon>Pseudomonadota</taxon>
        <taxon>Alphaproteobacteria</taxon>
        <taxon>Hyphomicrobiales</taxon>
        <taxon>Methylobacteriaceae</taxon>
        <taxon>Methylorubrum</taxon>
    </lineage>
</organism>
<protein>
    <recommendedName>
        <fullName evidence="1">Phosphoglycerate kinase</fullName>
        <ecNumber evidence="1">2.7.2.3</ecNumber>
    </recommendedName>
</protein>
<evidence type="ECO:0000255" key="1">
    <source>
        <dbReference type="HAMAP-Rule" id="MF_00145"/>
    </source>
</evidence>
<feature type="chain" id="PRO_1000203341" description="Phosphoglycerate kinase">
    <location>
        <begin position="1"/>
        <end position="400"/>
    </location>
</feature>
<feature type="binding site" evidence="1">
    <location>
        <begin position="23"/>
        <end position="25"/>
    </location>
    <ligand>
        <name>substrate</name>
    </ligand>
</feature>
<feature type="binding site" evidence="1">
    <location>
        <position position="38"/>
    </location>
    <ligand>
        <name>substrate</name>
    </ligand>
</feature>
<feature type="binding site" evidence="1">
    <location>
        <begin position="61"/>
        <end position="64"/>
    </location>
    <ligand>
        <name>substrate</name>
    </ligand>
</feature>
<feature type="binding site" evidence="1">
    <location>
        <position position="120"/>
    </location>
    <ligand>
        <name>substrate</name>
    </ligand>
</feature>
<feature type="binding site" evidence="1">
    <location>
        <position position="153"/>
    </location>
    <ligand>
        <name>substrate</name>
    </ligand>
</feature>
<feature type="binding site" evidence="1">
    <location>
        <position position="203"/>
    </location>
    <ligand>
        <name>ATP</name>
        <dbReference type="ChEBI" id="CHEBI:30616"/>
    </ligand>
</feature>
<feature type="binding site" evidence="1">
    <location>
        <position position="325"/>
    </location>
    <ligand>
        <name>ATP</name>
        <dbReference type="ChEBI" id="CHEBI:30616"/>
    </ligand>
</feature>
<feature type="binding site" evidence="1">
    <location>
        <begin position="355"/>
        <end position="358"/>
    </location>
    <ligand>
        <name>ATP</name>
        <dbReference type="ChEBI" id="CHEBI:30616"/>
    </ligand>
</feature>